<organism>
    <name type="scientific">Polynucleobacter asymbioticus (strain DSM 18221 / CIP 109841 / QLW-P1DMWA-1)</name>
    <name type="common">Polynucleobacter necessarius subsp. asymbioticus</name>
    <dbReference type="NCBI Taxonomy" id="312153"/>
    <lineage>
        <taxon>Bacteria</taxon>
        <taxon>Pseudomonadati</taxon>
        <taxon>Pseudomonadota</taxon>
        <taxon>Betaproteobacteria</taxon>
        <taxon>Burkholderiales</taxon>
        <taxon>Burkholderiaceae</taxon>
        <taxon>Polynucleobacter</taxon>
    </lineage>
</organism>
<comment type="function">
    <text evidence="1">An accessory protein needed during the final step in the assembly of 30S ribosomal subunit, possibly for assembly of the head region. Essential for efficient processing of 16S rRNA. May be needed both before and after RbfA during the maturation of 16S rRNA. It has affinity for free ribosomal 30S subunits but not for 70S ribosomes.</text>
</comment>
<comment type="subunit">
    <text evidence="1">Binds ribosomal protein uS19.</text>
</comment>
<comment type="subcellular location">
    <subcellularLocation>
        <location evidence="1">Cytoplasm</location>
    </subcellularLocation>
</comment>
<comment type="domain">
    <text evidence="1">The PRC barrel domain binds ribosomal protein uS19.</text>
</comment>
<comment type="similarity">
    <text evidence="1">Belongs to the RimM family.</text>
</comment>
<accession>A4SW74</accession>
<keyword id="KW-0143">Chaperone</keyword>
<keyword id="KW-0963">Cytoplasm</keyword>
<keyword id="KW-1185">Reference proteome</keyword>
<keyword id="KW-0690">Ribosome biogenesis</keyword>
<keyword id="KW-0698">rRNA processing</keyword>
<sequence>MSTPSLDNLIELGAISEAQGLQGQVKVRPHSPDPVALLSSKVVWLSLLPRRSAGALSSTEEATLTQYKVKSAKMHSGNVVLTLDGVSDRDQALALKGARILLDRDAFPKAESDSYYWVDLIGCKAKNLQDEILGDVIDVTENGAHGVIAIGDISTKTIQYLVPFVKEVVRNVDLPNKLLTLDWQSDWV</sequence>
<reference key="1">
    <citation type="journal article" date="2012" name="Stand. Genomic Sci.">
        <title>Complete genome sequence of Polynucleobacter necessarius subsp. asymbioticus type strain (QLW-P1DMWA-1(T)).</title>
        <authorList>
            <person name="Meincke L."/>
            <person name="Copeland A."/>
            <person name="Lapidus A."/>
            <person name="Lucas S."/>
            <person name="Berry K.W."/>
            <person name="Del Rio T.G."/>
            <person name="Hammon N."/>
            <person name="Dalin E."/>
            <person name="Tice H."/>
            <person name="Pitluck S."/>
            <person name="Richardson P."/>
            <person name="Bruce D."/>
            <person name="Goodwin L."/>
            <person name="Han C."/>
            <person name="Tapia R."/>
            <person name="Detter J.C."/>
            <person name="Schmutz J."/>
            <person name="Brettin T."/>
            <person name="Larimer F."/>
            <person name="Land M."/>
            <person name="Hauser L."/>
            <person name="Kyrpides N.C."/>
            <person name="Ivanova N."/>
            <person name="Goker M."/>
            <person name="Woyke T."/>
            <person name="Wu Q.L."/>
            <person name="Pockl M."/>
            <person name="Hahn M.W."/>
            <person name="Klenk H.P."/>
        </authorList>
    </citation>
    <scope>NUCLEOTIDE SEQUENCE [LARGE SCALE GENOMIC DNA]</scope>
    <source>
        <strain>DSM 18221 / CIP 109841 / QLW-P1DMWA-1</strain>
    </source>
</reference>
<gene>
    <name evidence="1" type="primary">rimM</name>
    <name type="ordered locus">Pnuc_0518</name>
</gene>
<dbReference type="EMBL" id="CP000655">
    <property type="protein sequence ID" value="ABP33738.1"/>
    <property type="molecule type" value="Genomic_DNA"/>
</dbReference>
<dbReference type="RefSeq" id="WP_011902363.1">
    <property type="nucleotide sequence ID" value="NC_009379.1"/>
</dbReference>
<dbReference type="SMR" id="A4SW74"/>
<dbReference type="GeneID" id="31480872"/>
<dbReference type="KEGG" id="pnu:Pnuc_0518"/>
<dbReference type="eggNOG" id="COG0806">
    <property type="taxonomic scope" value="Bacteria"/>
</dbReference>
<dbReference type="HOGENOM" id="CLU_077636_1_0_4"/>
<dbReference type="Proteomes" id="UP000000231">
    <property type="component" value="Chromosome"/>
</dbReference>
<dbReference type="GO" id="GO:0005737">
    <property type="term" value="C:cytoplasm"/>
    <property type="evidence" value="ECO:0007669"/>
    <property type="project" value="UniProtKB-SubCell"/>
</dbReference>
<dbReference type="GO" id="GO:0005840">
    <property type="term" value="C:ribosome"/>
    <property type="evidence" value="ECO:0007669"/>
    <property type="project" value="InterPro"/>
</dbReference>
<dbReference type="GO" id="GO:0043022">
    <property type="term" value="F:ribosome binding"/>
    <property type="evidence" value="ECO:0007669"/>
    <property type="project" value="InterPro"/>
</dbReference>
<dbReference type="GO" id="GO:0042274">
    <property type="term" value="P:ribosomal small subunit biogenesis"/>
    <property type="evidence" value="ECO:0007669"/>
    <property type="project" value="UniProtKB-UniRule"/>
</dbReference>
<dbReference type="GO" id="GO:0006364">
    <property type="term" value="P:rRNA processing"/>
    <property type="evidence" value="ECO:0007669"/>
    <property type="project" value="UniProtKB-UniRule"/>
</dbReference>
<dbReference type="Gene3D" id="2.30.30.240">
    <property type="entry name" value="PRC-barrel domain"/>
    <property type="match status" value="1"/>
</dbReference>
<dbReference type="Gene3D" id="2.40.30.60">
    <property type="entry name" value="RimM"/>
    <property type="match status" value="1"/>
</dbReference>
<dbReference type="HAMAP" id="MF_00014">
    <property type="entry name" value="Ribosome_mat_RimM"/>
    <property type="match status" value="1"/>
</dbReference>
<dbReference type="InterPro" id="IPR011033">
    <property type="entry name" value="PRC_barrel-like_sf"/>
</dbReference>
<dbReference type="InterPro" id="IPR056792">
    <property type="entry name" value="PRC_RimM"/>
</dbReference>
<dbReference type="InterPro" id="IPR011961">
    <property type="entry name" value="RimM"/>
</dbReference>
<dbReference type="InterPro" id="IPR002676">
    <property type="entry name" value="RimM_N"/>
</dbReference>
<dbReference type="InterPro" id="IPR036976">
    <property type="entry name" value="RimM_N_sf"/>
</dbReference>
<dbReference type="InterPro" id="IPR009000">
    <property type="entry name" value="Transl_B-barrel_sf"/>
</dbReference>
<dbReference type="NCBIfam" id="TIGR02273">
    <property type="entry name" value="16S_RimM"/>
    <property type="match status" value="1"/>
</dbReference>
<dbReference type="PANTHER" id="PTHR33692">
    <property type="entry name" value="RIBOSOME MATURATION FACTOR RIMM"/>
    <property type="match status" value="1"/>
</dbReference>
<dbReference type="PANTHER" id="PTHR33692:SF1">
    <property type="entry name" value="RIBOSOME MATURATION FACTOR RIMM"/>
    <property type="match status" value="1"/>
</dbReference>
<dbReference type="Pfam" id="PF24986">
    <property type="entry name" value="PRC_RimM"/>
    <property type="match status" value="1"/>
</dbReference>
<dbReference type="Pfam" id="PF01782">
    <property type="entry name" value="RimM"/>
    <property type="match status" value="1"/>
</dbReference>
<dbReference type="SUPFAM" id="SSF50346">
    <property type="entry name" value="PRC-barrel domain"/>
    <property type="match status" value="1"/>
</dbReference>
<dbReference type="SUPFAM" id="SSF50447">
    <property type="entry name" value="Translation proteins"/>
    <property type="match status" value="1"/>
</dbReference>
<evidence type="ECO:0000255" key="1">
    <source>
        <dbReference type="HAMAP-Rule" id="MF_00014"/>
    </source>
</evidence>
<proteinExistence type="inferred from homology"/>
<name>RIMM_POLAQ</name>
<feature type="chain" id="PRO_0000351787" description="Ribosome maturation factor RimM">
    <location>
        <begin position="1"/>
        <end position="188"/>
    </location>
</feature>
<feature type="domain" description="PRC barrel" evidence="1">
    <location>
        <begin position="112"/>
        <end position="187"/>
    </location>
</feature>
<protein>
    <recommendedName>
        <fullName evidence="1">Ribosome maturation factor RimM</fullName>
    </recommendedName>
</protein>